<gene>
    <name evidence="1" type="primary">aceK</name>
    <name type="ordered locus">BPSL0373</name>
</gene>
<keyword id="KW-0067">ATP-binding</keyword>
<keyword id="KW-0963">Cytoplasm</keyword>
<keyword id="KW-0329">Glyoxylate bypass</keyword>
<keyword id="KW-0378">Hydrolase</keyword>
<keyword id="KW-0418">Kinase</keyword>
<keyword id="KW-0547">Nucleotide-binding</keyword>
<keyword id="KW-0904">Protein phosphatase</keyword>
<keyword id="KW-1185">Reference proteome</keyword>
<keyword id="KW-0723">Serine/threonine-protein kinase</keyword>
<keyword id="KW-0808">Transferase</keyword>
<keyword id="KW-0816">Tricarboxylic acid cycle</keyword>
<reference key="1">
    <citation type="journal article" date="2004" name="Proc. Natl. Acad. Sci. U.S.A.">
        <title>Genomic plasticity of the causative agent of melioidosis, Burkholderia pseudomallei.</title>
        <authorList>
            <person name="Holden M.T.G."/>
            <person name="Titball R.W."/>
            <person name="Peacock S.J."/>
            <person name="Cerdeno-Tarraga A.-M."/>
            <person name="Atkins T."/>
            <person name="Crossman L.C."/>
            <person name="Pitt T."/>
            <person name="Churcher C."/>
            <person name="Mungall K.L."/>
            <person name="Bentley S.D."/>
            <person name="Sebaihia M."/>
            <person name="Thomson N.R."/>
            <person name="Bason N."/>
            <person name="Beacham I.R."/>
            <person name="Brooks K."/>
            <person name="Brown K.A."/>
            <person name="Brown N.F."/>
            <person name="Challis G.L."/>
            <person name="Cherevach I."/>
            <person name="Chillingworth T."/>
            <person name="Cronin A."/>
            <person name="Crossett B."/>
            <person name="Davis P."/>
            <person name="DeShazer D."/>
            <person name="Feltwell T."/>
            <person name="Fraser A."/>
            <person name="Hance Z."/>
            <person name="Hauser H."/>
            <person name="Holroyd S."/>
            <person name="Jagels K."/>
            <person name="Keith K.E."/>
            <person name="Maddison M."/>
            <person name="Moule S."/>
            <person name="Price C."/>
            <person name="Quail M.A."/>
            <person name="Rabbinowitsch E."/>
            <person name="Rutherford K."/>
            <person name="Sanders M."/>
            <person name="Simmonds M."/>
            <person name="Songsivilai S."/>
            <person name="Stevens K."/>
            <person name="Tumapa S."/>
            <person name="Vesaratchavest M."/>
            <person name="Whitehead S."/>
            <person name="Yeats C."/>
            <person name="Barrell B.G."/>
            <person name="Oyston P.C.F."/>
            <person name="Parkhill J."/>
        </authorList>
    </citation>
    <scope>NUCLEOTIDE SEQUENCE [LARGE SCALE GENOMIC DNA]</scope>
    <source>
        <strain>K96243</strain>
    </source>
</reference>
<evidence type="ECO:0000255" key="1">
    <source>
        <dbReference type="HAMAP-Rule" id="MF_00747"/>
    </source>
</evidence>
<organism>
    <name type="scientific">Burkholderia pseudomallei (strain K96243)</name>
    <dbReference type="NCBI Taxonomy" id="272560"/>
    <lineage>
        <taxon>Bacteria</taxon>
        <taxon>Pseudomonadati</taxon>
        <taxon>Pseudomonadota</taxon>
        <taxon>Betaproteobacteria</taxon>
        <taxon>Burkholderiales</taxon>
        <taxon>Burkholderiaceae</taxon>
        <taxon>Burkholderia</taxon>
        <taxon>pseudomallei group</taxon>
    </lineage>
</organism>
<sequence>MNHFPKLLSSQIGFDVAQTILENFDRHYRIFREAAVEAKDLFERADWHGLQRLARERITSYDDRVRECVELLEDEYDAENIDNEVWPQIKLHYIGLLTSHRQPECAETFFNSVCCKILHRAYFNNDFIFVRPAISTEYIENDEPAAKPTYRAYYPGSEGLAATLERIVTNFQLNPPFEDLERDIACIMQAIHDEFGAFDEAVNFQIHVLSSLFYRNKTAYVVGRIINGDRVLPFAVPIRHARAGILALDTVLLRRDQLKIIFSFSHSYFLVDMNVPSAYVQFLRSIMPGKPKAEIYTSVGLQKQGKNLFYRDLLHHLSHSSDRFIVAPGIKGLVMLVFTLPSFPYVFKMIKDHFPPPKDTTREQIMAKYLLVKRHDRLGRMADTLEYSSVALPLARLDDALVRELEKEVPSLIEYEGENLVIKHLYIERRMVPLNLYLQNGSDAEIEHGVREYGNAVKELMQANIFPGDMLYKNFGVTRHGRVVFYDYDEIEYLTDCNVRRVPPPRNDEDEMSGEPWYTVGPHDIFPETYAPFLLGDPRVREHFLAHHADFFDPQLWQDSKDRLLRGELPDFFAYEPALRFCIRYPERFAPGDAADGGKLAAA</sequence>
<dbReference type="EC" id="2.7.11.5" evidence="1"/>
<dbReference type="EC" id="3.1.3.-" evidence="1"/>
<dbReference type="EMBL" id="BX571965">
    <property type="protein sequence ID" value="CAH34361.1"/>
    <property type="molecule type" value="Genomic_DNA"/>
</dbReference>
<dbReference type="RefSeq" id="WP_004525974.1">
    <property type="nucleotide sequence ID" value="NZ_CP009538.1"/>
</dbReference>
<dbReference type="RefSeq" id="YP_106999.1">
    <property type="nucleotide sequence ID" value="NC_006350.1"/>
</dbReference>
<dbReference type="SMR" id="Q63Y16"/>
<dbReference type="STRING" id="272560.BPSL0373"/>
<dbReference type="GeneID" id="93058891"/>
<dbReference type="KEGG" id="bps:BPSL0373"/>
<dbReference type="PATRIC" id="fig|272560.51.peg.1296"/>
<dbReference type="eggNOG" id="COG4579">
    <property type="taxonomic scope" value="Bacteria"/>
</dbReference>
<dbReference type="BRENDA" id="2.7.11.5">
    <property type="organism ID" value="1031"/>
</dbReference>
<dbReference type="Proteomes" id="UP000000605">
    <property type="component" value="Chromosome 1"/>
</dbReference>
<dbReference type="GO" id="GO:0005737">
    <property type="term" value="C:cytoplasm"/>
    <property type="evidence" value="ECO:0007669"/>
    <property type="project" value="UniProtKB-SubCell"/>
</dbReference>
<dbReference type="GO" id="GO:0008772">
    <property type="term" value="F:[isocitrate dehydrogenase (NADP+)] kinase activity"/>
    <property type="evidence" value="ECO:0007669"/>
    <property type="project" value="UniProtKB-UniRule"/>
</dbReference>
<dbReference type="GO" id="GO:0016208">
    <property type="term" value="F:AMP binding"/>
    <property type="evidence" value="ECO:0007669"/>
    <property type="project" value="TreeGrafter"/>
</dbReference>
<dbReference type="GO" id="GO:0005524">
    <property type="term" value="F:ATP binding"/>
    <property type="evidence" value="ECO:0007669"/>
    <property type="project" value="UniProtKB-UniRule"/>
</dbReference>
<dbReference type="GO" id="GO:0004721">
    <property type="term" value="F:phosphoprotein phosphatase activity"/>
    <property type="evidence" value="ECO:0007669"/>
    <property type="project" value="UniProtKB-KW"/>
</dbReference>
<dbReference type="GO" id="GO:0004674">
    <property type="term" value="F:protein serine/threonine kinase activity"/>
    <property type="evidence" value="ECO:0007669"/>
    <property type="project" value="UniProtKB-KW"/>
</dbReference>
<dbReference type="GO" id="GO:0006006">
    <property type="term" value="P:glucose metabolic process"/>
    <property type="evidence" value="ECO:0007669"/>
    <property type="project" value="InterPro"/>
</dbReference>
<dbReference type="GO" id="GO:0006097">
    <property type="term" value="P:glyoxylate cycle"/>
    <property type="evidence" value="ECO:0007669"/>
    <property type="project" value="UniProtKB-UniRule"/>
</dbReference>
<dbReference type="GO" id="GO:0006099">
    <property type="term" value="P:tricarboxylic acid cycle"/>
    <property type="evidence" value="ECO:0007669"/>
    <property type="project" value="UniProtKB-UniRule"/>
</dbReference>
<dbReference type="HAMAP" id="MF_00747">
    <property type="entry name" value="AceK"/>
    <property type="match status" value="1"/>
</dbReference>
<dbReference type="InterPro" id="IPR046855">
    <property type="entry name" value="AceK_kinase"/>
</dbReference>
<dbReference type="InterPro" id="IPR046854">
    <property type="entry name" value="AceK_regulatory"/>
</dbReference>
<dbReference type="InterPro" id="IPR010452">
    <property type="entry name" value="Isocitrate_DH_AceK"/>
</dbReference>
<dbReference type="NCBIfam" id="NF002804">
    <property type="entry name" value="PRK02946.1"/>
    <property type="match status" value="1"/>
</dbReference>
<dbReference type="PANTHER" id="PTHR39559">
    <property type="match status" value="1"/>
</dbReference>
<dbReference type="PANTHER" id="PTHR39559:SF1">
    <property type="entry name" value="ISOCITRATE DEHYDROGENASE KINASE_PHOSPHATASE"/>
    <property type="match status" value="1"/>
</dbReference>
<dbReference type="Pfam" id="PF06315">
    <property type="entry name" value="AceK_kinase"/>
    <property type="match status" value="1"/>
</dbReference>
<dbReference type="Pfam" id="PF20423">
    <property type="entry name" value="AceK_regulatory"/>
    <property type="match status" value="1"/>
</dbReference>
<dbReference type="PIRSF" id="PIRSF000719">
    <property type="entry name" value="AceK"/>
    <property type="match status" value="1"/>
</dbReference>
<proteinExistence type="inferred from homology"/>
<protein>
    <recommendedName>
        <fullName evidence="1">Isocitrate dehydrogenase kinase/phosphatase</fullName>
        <shortName evidence="1">IDH kinase/phosphatase</shortName>
        <shortName evidence="1">IDHK/P</shortName>
        <ecNumber evidence="1">2.7.11.5</ecNumber>
        <ecNumber evidence="1">3.1.3.-</ecNumber>
    </recommendedName>
</protein>
<name>ACEK_BURPS</name>
<comment type="function">
    <text evidence="1">Bifunctional enzyme which can phosphorylate or dephosphorylate isocitrate dehydrogenase (IDH) on a specific serine residue. This is a regulatory mechanism which enables bacteria to bypass the Krebs cycle via the glyoxylate shunt in response to the source of carbon. When bacteria are grown on glucose, IDH is fully active and unphosphorylated, but when grown on acetate or ethanol, the activity of IDH declines drastically concomitant with its phosphorylation.</text>
</comment>
<comment type="catalytic activity">
    <reaction evidence="1">
        <text>L-seryl-[isocitrate dehydrogenase] + ATP = O-phospho-L-seryl-[isocitrate dehydrogenase] + ADP + H(+)</text>
        <dbReference type="Rhea" id="RHEA:43540"/>
        <dbReference type="Rhea" id="RHEA-COMP:10605"/>
        <dbReference type="Rhea" id="RHEA-COMP:10606"/>
        <dbReference type="ChEBI" id="CHEBI:15378"/>
        <dbReference type="ChEBI" id="CHEBI:29999"/>
        <dbReference type="ChEBI" id="CHEBI:30616"/>
        <dbReference type="ChEBI" id="CHEBI:83421"/>
        <dbReference type="ChEBI" id="CHEBI:456216"/>
        <dbReference type="EC" id="2.7.11.5"/>
    </reaction>
</comment>
<comment type="subcellular location">
    <subcellularLocation>
        <location evidence="1">Cytoplasm</location>
    </subcellularLocation>
</comment>
<comment type="similarity">
    <text evidence="1">Belongs to the AceK family.</text>
</comment>
<feature type="chain" id="PRO_0000057897" description="Isocitrate dehydrogenase kinase/phosphatase">
    <location>
        <begin position="1"/>
        <end position="603"/>
    </location>
</feature>
<feature type="active site" evidence="1">
    <location>
        <position position="383"/>
    </location>
</feature>
<feature type="binding site" evidence="1">
    <location>
        <begin position="327"/>
        <end position="333"/>
    </location>
    <ligand>
        <name>ATP</name>
        <dbReference type="ChEBI" id="CHEBI:30616"/>
    </ligand>
</feature>
<feature type="binding site" evidence="1">
    <location>
        <position position="348"/>
    </location>
    <ligand>
        <name>ATP</name>
        <dbReference type="ChEBI" id="CHEBI:30616"/>
    </ligand>
</feature>
<accession>Q63Y16</accession>